<evidence type="ECO:0000250" key="1"/>
<evidence type="ECO:0000250" key="2">
    <source>
        <dbReference type="UniProtKB" id="P05026"/>
    </source>
</evidence>
<evidence type="ECO:0000250" key="3">
    <source>
        <dbReference type="UniProtKB" id="P07340"/>
    </source>
</evidence>
<evidence type="ECO:0000250" key="4">
    <source>
        <dbReference type="UniProtKB" id="P14094"/>
    </source>
</evidence>
<evidence type="ECO:0000255" key="5"/>
<evidence type="ECO:0000305" key="6"/>
<proteinExistence type="evidence at transcript level"/>
<name>AT1B1_PANTR</name>
<dbReference type="EMBL" id="AB222126">
    <property type="protein sequence ID" value="BAF62371.1"/>
    <property type="molecule type" value="mRNA"/>
</dbReference>
<dbReference type="RefSeq" id="NP_001092025.1">
    <property type="nucleotide sequence ID" value="NM_001098555.1"/>
</dbReference>
<dbReference type="SMR" id="A5A6J8"/>
<dbReference type="FunCoup" id="A5A6J8">
    <property type="interactions" value="1203"/>
</dbReference>
<dbReference type="STRING" id="9598.ENSPTRP00000002750"/>
<dbReference type="GlyCosmos" id="A5A6J8">
    <property type="glycosylation" value="3 sites, No reported glycans"/>
</dbReference>
<dbReference type="PaxDb" id="9598-ENSPTRP00000002750"/>
<dbReference type="Ensembl" id="ENSPTRT00000002998.4">
    <property type="protein sequence ID" value="ENSPTRP00000002750.3"/>
    <property type="gene ID" value="ENSPTRG00000001653.6"/>
</dbReference>
<dbReference type="GeneID" id="457497"/>
<dbReference type="KEGG" id="ptr:457497"/>
<dbReference type="CTD" id="481"/>
<dbReference type="VGNC" id="VGNC:8031">
    <property type="gene designation" value="ATP1B1"/>
</dbReference>
<dbReference type="eggNOG" id="KOG3927">
    <property type="taxonomic scope" value="Eukaryota"/>
</dbReference>
<dbReference type="GeneTree" id="ENSGT01030000234579"/>
<dbReference type="HOGENOM" id="CLU_057702_2_0_1"/>
<dbReference type="InParanoid" id="A5A6J8"/>
<dbReference type="OMA" id="WEGFRVF"/>
<dbReference type="OrthoDB" id="1602at9604"/>
<dbReference type="TreeFam" id="TF314618"/>
<dbReference type="Proteomes" id="UP000002277">
    <property type="component" value="Chromosome 1"/>
</dbReference>
<dbReference type="Bgee" id="ENSPTRG00000001653">
    <property type="expression patterns" value="Expressed in primary visual cortex and 21 other cell types or tissues"/>
</dbReference>
<dbReference type="GO" id="GO:0016324">
    <property type="term" value="C:apical plasma membrane"/>
    <property type="evidence" value="ECO:0000250"/>
    <property type="project" value="UniProtKB"/>
</dbReference>
<dbReference type="GO" id="GO:0016323">
    <property type="term" value="C:basolateral plasma membrane"/>
    <property type="evidence" value="ECO:0007669"/>
    <property type="project" value="Ensembl"/>
</dbReference>
<dbReference type="GO" id="GO:0014704">
    <property type="term" value="C:intercalated disc"/>
    <property type="evidence" value="ECO:0007669"/>
    <property type="project" value="Ensembl"/>
</dbReference>
<dbReference type="GO" id="GO:0016328">
    <property type="term" value="C:lateral plasma membrane"/>
    <property type="evidence" value="ECO:0007669"/>
    <property type="project" value="Ensembl"/>
</dbReference>
<dbReference type="GO" id="GO:0031090">
    <property type="term" value="C:organelle membrane"/>
    <property type="evidence" value="ECO:0007669"/>
    <property type="project" value="Ensembl"/>
</dbReference>
<dbReference type="GO" id="GO:0005890">
    <property type="term" value="C:sodium:potassium-exchanging ATPase complex"/>
    <property type="evidence" value="ECO:0000318"/>
    <property type="project" value="GO_Central"/>
</dbReference>
<dbReference type="GO" id="GO:0036126">
    <property type="term" value="C:sperm flagellum"/>
    <property type="evidence" value="ECO:0007669"/>
    <property type="project" value="Ensembl"/>
</dbReference>
<dbReference type="GO" id="GO:0030315">
    <property type="term" value="C:T-tubule"/>
    <property type="evidence" value="ECO:0007669"/>
    <property type="project" value="Ensembl"/>
</dbReference>
<dbReference type="GO" id="GO:0001671">
    <property type="term" value="F:ATPase activator activity"/>
    <property type="evidence" value="ECO:0000318"/>
    <property type="project" value="GO_Central"/>
</dbReference>
<dbReference type="GO" id="GO:0051117">
    <property type="term" value="F:ATPase binding"/>
    <property type="evidence" value="ECO:0007669"/>
    <property type="project" value="Ensembl"/>
</dbReference>
<dbReference type="GO" id="GO:0005391">
    <property type="term" value="F:P-type sodium:potassium-exchanging transporter activity"/>
    <property type="evidence" value="ECO:0007669"/>
    <property type="project" value="Ensembl"/>
</dbReference>
<dbReference type="GO" id="GO:0019901">
    <property type="term" value="F:protein kinase binding"/>
    <property type="evidence" value="ECO:0007669"/>
    <property type="project" value="Ensembl"/>
</dbReference>
<dbReference type="GO" id="GO:0030674">
    <property type="term" value="F:protein-macromolecule adaptor activity"/>
    <property type="evidence" value="ECO:0007669"/>
    <property type="project" value="Ensembl"/>
</dbReference>
<dbReference type="GO" id="GO:0141109">
    <property type="term" value="F:transporter activator activity"/>
    <property type="evidence" value="ECO:0007669"/>
    <property type="project" value="Ensembl"/>
</dbReference>
<dbReference type="GO" id="GO:0046034">
    <property type="term" value="P:ATP metabolic process"/>
    <property type="evidence" value="ECO:0007669"/>
    <property type="project" value="Ensembl"/>
</dbReference>
<dbReference type="GO" id="GO:0060048">
    <property type="term" value="P:cardiac muscle contraction"/>
    <property type="evidence" value="ECO:0007669"/>
    <property type="project" value="Ensembl"/>
</dbReference>
<dbReference type="GO" id="GO:0007155">
    <property type="term" value="P:cell adhesion"/>
    <property type="evidence" value="ECO:0007669"/>
    <property type="project" value="UniProtKB-KW"/>
</dbReference>
<dbReference type="GO" id="GO:0045087">
    <property type="term" value="P:innate immune response"/>
    <property type="evidence" value="ECO:0007669"/>
    <property type="project" value="UniProtKB-KW"/>
</dbReference>
<dbReference type="GO" id="GO:0006874">
    <property type="term" value="P:intracellular calcium ion homeostasis"/>
    <property type="evidence" value="ECO:0007669"/>
    <property type="project" value="Ensembl"/>
</dbReference>
<dbReference type="GO" id="GO:0030007">
    <property type="term" value="P:intracellular potassium ion homeostasis"/>
    <property type="evidence" value="ECO:0000318"/>
    <property type="project" value="GO_Central"/>
</dbReference>
<dbReference type="GO" id="GO:0006883">
    <property type="term" value="P:intracellular sodium ion homeostasis"/>
    <property type="evidence" value="ECO:0000318"/>
    <property type="project" value="GO_Central"/>
</dbReference>
<dbReference type="GO" id="GO:0086009">
    <property type="term" value="P:membrane repolarization"/>
    <property type="evidence" value="ECO:0007669"/>
    <property type="project" value="Ensembl"/>
</dbReference>
<dbReference type="GO" id="GO:1903288">
    <property type="term" value="P:positive regulation of potassium ion import across plasma membrane"/>
    <property type="evidence" value="ECO:0007669"/>
    <property type="project" value="Ensembl"/>
</dbReference>
<dbReference type="GO" id="GO:1903278">
    <property type="term" value="P:positive regulation of sodium ion export across plasma membrane"/>
    <property type="evidence" value="ECO:0007669"/>
    <property type="project" value="Ensembl"/>
</dbReference>
<dbReference type="GO" id="GO:1990573">
    <property type="term" value="P:potassium ion import across plasma membrane"/>
    <property type="evidence" value="ECO:0000318"/>
    <property type="project" value="GO_Central"/>
</dbReference>
<dbReference type="GO" id="GO:0072659">
    <property type="term" value="P:protein localization to plasma membrane"/>
    <property type="evidence" value="ECO:0007669"/>
    <property type="project" value="Ensembl"/>
</dbReference>
<dbReference type="GO" id="GO:0050821">
    <property type="term" value="P:protein stabilization"/>
    <property type="evidence" value="ECO:0007669"/>
    <property type="project" value="Ensembl"/>
</dbReference>
<dbReference type="GO" id="GO:1903169">
    <property type="term" value="P:regulation of calcium ion transmembrane transport"/>
    <property type="evidence" value="ECO:0007669"/>
    <property type="project" value="Ensembl"/>
</dbReference>
<dbReference type="GO" id="GO:0010882">
    <property type="term" value="P:regulation of cardiac muscle contraction by calcium ion signaling"/>
    <property type="evidence" value="ECO:0007669"/>
    <property type="project" value="Ensembl"/>
</dbReference>
<dbReference type="GO" id="GO:0010468">
    <property type="term" value="P:regulation of gene expression"/>
    <property type="evidence" value="ECO:0007669"/>
    <property type="project" value="Ensembl"/>
</dbReference>
<dbReference type="GO" id="GO:0055119">
    <property type="term" value="P:relaxation of cardiac muscle"/>
    <property type="evidence" value="ECO:0007669"/>
    <property type="project" value="Ensembl"/>
</dbReference>
<dbReference type="GO" id="GO:0036376">
    <property type="term" value="P:sodium ion export across plasma membrane"/>
    <property type="evidence" value="ECO:0000318"/>
    <property type="project" value="GO_Central"/>
</dbReference>
<dbReference type="FunFam" id="1.20.5.170:FF:000062">
    <property type="entry name" value="Sodium/potassium-transporting ATPase subunit beta"/>
    <property type="match status" value="1"/>
</dbReference>
<dbReference type="FunFam" id="2.60.40.1660:FF:000002">
    <property type="entry name" value="Sodium/potassium-transporting ATPase subunit beta"/>
    <property type="match status" value="1"/>
</dbReference>
<dbReference type="Gene3D" id="1.20.5.170">
    <property type="match status" value="1"/>
</dbReference>
<dbReference type="Gene3D" id="2.60.40.1660">
    <property type="entry name" value="Na, k-atpase alpha subunit"/>
    <property type="match status" value="1"/>
</dbReference>
<dbReference type="InterPro" id="IPR000402">
    <property type="entry name" value="Na/K_ATPase_sub_beta"/>
</dbReference>
<dbReference type="InterPro" id="IPR038702">
    <property type="entry name" value="Na/K_ATPase_sub_beta_sf"/>
</dbReference>
<dbReference type="NCBIfam" id="TIGR01107">
    <property type="entry name" value="Na_K_ATPase_bet"/>
    <property type="match status" value="1"/>
</dbReference>
<dbReference type="PANTHER" id="PTHR11523">
    <property type="entry name" value="SODIUM/POTASSIUM-DEPENDENT ATPASE BETA SUBUNIT"/>
    <property type="match status" value="1"/>
</dbReference>
<dbReference type="PANTHER" id="PTHR11523:SF10">
    <property type="entry name" value="SODIUM_POTASSIUM-TRANSPORTING ATPASE SUBUNIT BETA-1"/>
    <property type="match status" value="1"/>
</dbReference>
<dbReference type="Pfam" id="PF00287">
    <property type="entry name" value="Na_K-ATPase"/>
    <property type="match status" value="1"/>
</dbReference>
<dbReference type="PROSITE" id="PS00390">
    <property type="entry name" value="ATPASE_NA_K_BETA_1"/>
    <property type="match status" value="1"/>
</dbReference>
<dbReference type="PROSITE" id="PS00391">
    <property type="entry name" value="ATPASE_NA_K_BETA_2"/>
    <property type="match status" value="1"/>
</dbReference>
<feature type="chain" id="PRO_0000297550" description="Sodium/potassium-transporting ATPase subunit beta-1">
    <location>
        <begin position="1"/>
        <end position="303"/>
    </location>
</feature>
<feature type="topological domain" description="Cytoplasmic" evidence="5">
    <location>
        <begin position="1"/>
        <end position="34"/>
    </location>
</feature>
<feature type="transmembrane region" description="Helical; Signal-anchor for type II membrane protein" evidence="5">
    <location>
        <begin position="35"/>
        <end position="62"/>
    </location>
</feature>
<feature type="topological domain" description="Extracellular" evidence="5">
    <location>
        <begin position="63"/>
        <end position="303"/>
    </location>
</feature>
<feature type="region of interest" description="immunoglobulin-like" evidence="1">
    <location>
        <begin position="191"/>
        <end position="303"/>
    </location>
</feature>
<feature type="modified residue" description="Phosphoserine" evidence="3">
    <location>
        <position position="11"/>
    </location>
</feature>
<feature type="modified residue" description="Phosphotyrosine" evidence="4">
    <location>
        <position position="101"/>
    </location>
</feature>
<feature type="glycosylation site" description="N-linked (GlcNAc...) asparagine" evidence="1">
    <location>
        <position position="158"/>
    </location>
</feature>
<feature type="glycosylation site" description="N-linked (GlcNAc...) asparagine" evidence="1">
    <location>
        <position position="193"/>
    </location>
</feature>
<feature type="glycosylation site" description="N-linked (GlcNAc...) asparagine" evidence="1">
    <location>
        <position position="265"/>
    </location>
</feature>
<feature type="disulfide bond" evidence="1">
    <location>
        <begin position="126"/>
        <end position="149"/>
    </location>
</feature>
<feature type="disulfide bond" evidence="1">
    <location>
        <begin position="159"/>
        <end position="175"/>
    </location>
</feature>
<feature type="disulfide bond" evidence="1">
    <location>
        <begin position="213"/>
        <end position="276"/>
    </location>
</feature>
<accession>A5A6J8</accession>
<organism>
    <name type="scientific">Pan troglodytes</name>
    <name type="common">Chimpanzee</name>
    <dbReference type="NCBI Taxonomy" id="9598"/>
    <lineage>
        <taxon>Eukaryota</taxon>
        <taxon>Metazoa</taxon>
        <taxon>Chordata</taxon>
        <taxon>Craniata</taxon>
        <taxon>Vertebrata</taxon>
        <taxon>Euteleostomi</taxon>
        <taxon>Mammalia</taxon>
        <taxon>Eutheria</taxon>
        <taxon>Euarchontoglires</taxon>
        <taxon>Primates</taxon>
        <taxon>Haplorrhini</taxon>
        <taxon>Catarrhini</taxon>
        <taxon>Hominidae</taxon>
        <taxon>Pan</taxon>
    </lineage>
</organism>
<reference key="1">
    <citation type="journal article" date="2007" name="Gene">
        <title>Mapping of chimpanzee full-length cDNAs onto the human genome unveils large potential divergence of the transcriptome.</title>
        <authorList>
            <person name="Sakate R."/>
            <person name="Suto Y."/>
            <person name="Imanishi T."/>
            <person name="Tanoue T."/>
            <person name="Hida M."/>
            <person name="Hayasaka I."/>
            <person name="Kusuda J."/>
            <person name="Gojobori T."/>
            <person name="Hashimoto K."/>
            <person name="Hirai M."/>
        </authorList>
    </citation>
    <scope>NUCLEOTIDE SEQUENCE [MRNA]</scope>
    <source>
        <tissue>Brain</tissue>
    </source>
</reference>
<keyword id="KW-0130">Cell adhesion</keyword>
<keyword id="KW-1003">Cell membrane</keyword>
<keyword id="KW-1015">Disulfide bond</keyword>
<keyword id="KW-0318">Glutathionylation</keyword>
<keyword id="KW-0325">Glycoprotein</keyword>
<keyword id="KW-0391">Immunity</keyword>
<keyword id="KW-0399">Innate immunity</keyword>
<keyword id="KW-0406">Ion transport</keyword>
<keyword id="KW-0472">Membrane</keyword>
<keyword id="KW-0597">Phosphoprotein</keyword>
<keyword id="KW-0630">Potassium</keyword>
<keyword id="KW-0633">Potassium transport</keyword>
<keyword id="KW-1185">Reference proteome</keyword>
<keyword id="KW-0735">Signal-anchor</keyword>
<keyword id="KW-0915">Sodium</keyword>
<keyword id="KW-0739">Sodium transport</keyword>
<keyword id="KW-0740">Sodium/potassium transport</keyword>
<keyword id="KW-0812">Transmembrane</keyword>
<keyword id="KW-1133">Transmembrane helix</keyword>
<keyword id="KW-0813">Transport</keyword>
<gene>
    <name type="primary">ATP1B1</name>
</gene>
<protein>
    <recommendedName>
        <fullName>Sodium/potassium-transporting ATPase subunit beta-1</fullName>
    </recommendedName>
    <alternativeName>
        <fullName>Sodium/potassium-dependent ATPase subunit beta-1</fullName>
    </alternativeName>
</protein>
<comment type="function">
    <text evidence="2">This is the non-catalytic component of the active enzyme, which catalyzes the hydrolysis of ATP coupled with the exchange of Na(+) and K(+) ions across the plasma membrane. The beta subunit regulates, through assembly of alpha/beta heterodimers, the number of sodium pumps transported to the plasma membrane. Plays a role in innate immunity by enhancing virus-triggered induction of interferons (IFNs) and interferon stimulated genes (ISGs). Mechanistically, enhances the ubiquitination of TRAF3 and TRAF6 as well as the phosphorylation of TAK1 and TBK1.</text>
</comment>
<comment type="function">
    <text evidence="2">Involved in cell adhesion and establishing epithelial cell polarity.</text>
</comment>
<comment type="subunit">
    <text evidence="2 3 4">The sodium/potassium-transporting ATPase is composed of a catalytic alpha subunit, an auxiliary non-catalytic beta subunit and an additional regulatory subunit. Interacts with catalytic subunit ATP12A (By similarity). Interacts with regulatory subunit FXYD1 (By similarity). Interacts with regulatory subunit FXYD3 (By similarity). Interacts with NKAIN1, NKAIN2 and NKAIN4 (By similarity). Interacts with MLC1. Part of a complex containing MLC1, TRPV4, AQP4 and HEPACAM. Interacts with KIRREL3 (By similarity). Interacts with OBSCN (via protein kinase domain 1) (By similarity). Interacts with TRAF3 and TRAF6 (By similarity).</text>
</comment>
<comment type="subcellular location">
    <subcellularLocation>
        <location evidence="5">Cell membrane</location>
        <topology evidence="5">Single-pass type II membrane protein</topology>
    </subcellularLocation>
    <subcellularLocation>
        <location evidence="3">Apical cell membrane</location>
        <topology evidence="5">Single-pass type II membrane protein</topology>
    </subcellularLocation>
    <subcellularLocation>
        <location evidence="4">Cell membrane</location>
        <location evidence="4">Sarcolemma</location>
    </subcellularLocation>
    <text evidence="4">Colocalizes with OBSCN at the intercalated disk and sarcolemma in cardiomyocytes. Localizes in long striations at the level of Z and M lines.</text>
</comment>
<comment type="domain">
    <text evidence="1">The C-terminal lobe folds into an immunoglobulin-like domain and mediates cell adhesion properties.</text>
</comment>
<comment type="PTM">
    <text evidence="3 4">Glutathionylated (By similarity). N-glycosylated (By similarity).</text>
</comment>
<comment type="similarity">
    <text evidence="6">Belongs to the X(+)/potassium ATPases subunit beta family.</text>
</comment>
<sequence>MARGKAKEEGSWKKFIWNSEKKEFLGRTGGSWFKILLFYVIFYGCLAGIFIGTIQVMLLTISEFKPTYQDRVAPPGLTQIPQIQKTEISFRPNDPKSYEAYVLNIVRFLEKYKDSAQRDDMIFEDCGDVPSEPKERGDFNHERGERKVCRFKLEWLGNCSGLNDETYGYKEGKPCIIIKLNRVLGFKPKPPKNESLETYPVMKYNPNVLPVQCTGKRDEDKDKIGNVEYFGLGNSPGFPLQYYPYYGKLLQPKYLQPLLAVQFTNLTMDTEIRIECKAYGENIGYSEKDRFQGRFDVKIEVKS</sequence>